<evidence type="ECO:0000256" key="1">
    <source>
        <dbReference type="SAM" id="MobiDB-lite"/>
    </source>
</evidence>
<sequence>MERSNAATKCGEEPRSGSRRLPKAEGDKSGSAGAPSKNSSRLGGRPCMCTAGRRPNRASGRRRRSCSPAPTWPPLCCYPQSRPTASAAGPGACMRASGRPHGNTTASTAPPRHPRPRRPGGPALRPTPRPCAGPAPPPASRDCRCRRPRRWPRAGRRGRRAGACKPSCAGAAWSARGAPLCSYRTSCAGSCGARTAPTPAPTCASPSAAASSCCRRRRACSSPTTAWSGACGAGPTAATAAQPGKPRSAAAPGRARA</sequence>
<dbReference type="EMBL" id="AK024342">
    <property type="protein sequence ID" value="BAB14892.1"/>
    <property type="molecule type" value="mRNA"/>
</dbReference>
<dbReference type="EMBL" id="AL121928">
    <property type="status" value="NOT_ANNOTATED_CDS"/>
    <property type="molecule type" value="Genomic_DNA"/>
</dbReference>
<dbReference type="EMBL" id="BC126459">
    <property type="protein sequence ID" value="AAI26460.1"/>
    <property type="molecule type" value="mRNA"/>
</dbReference>
<dbReference type="RefSeq" id="NP_079162.1">
    <property type="nucleotide sequence ID" value="NM_024886.2"/>
</dbReference>
<dbReference type="BioGRID" id="123017">
    <property type="interactions" value="1"/>
</dbReference>
<dbReference type="FunCoup" id="Q9H7T3">
    <property type="interactions" value="1"/>
</dbReference>
<dbReference type="IntAct" id="Q9H7T3">
    <property type="interactions" value="1"/>
</dbReference>
<dbReference type="MINT" id="Q9H7T3"/>
<dbReference type="GlyGen" id="Q9H7T3">
    <property type="glycosylation" value="3 sites"/>
</dbReference>
<dbReference type="iPTMnet" id="Q9H7T3"/>
<dbReference type="PhosphoSitePlus" id="Q9H7T3"/>
<dbReference type="BioMuta" id="C10orf95"/>
<dbReference type="DMDM" id="68565299"/>
<dbReference type="PaxDb" id="9606-ENSP00000239125"/>
<dbReference type="AGR" id="HGNC:25880"/>
<dbReference type="GeneCards" id="C10orf95"/>
<dbReference type="HGNC" id="HGNC:25880">
    <property type="gene designation" value="C10orf95"/>
</dbReference>
<dbReference type="neXtProt" id="NX_Q9H7T3"/>
<dbReference type="PharmGKB" id="PA134908188"/>
<dbReference type="eggNOG" id="ENOG502TF2D">
    <property type="taxonomic scope" value="Eukaryota"/>
</dbReference>
<dbReference type="InParanoid" id="Q9H7T3"/>
<dbReference type="OrthoDB" id="9996891at2759"/>
<dbReference type="PAN-GO" id="Q9H7T3">
    <property type="GO annotations" value="0 GO annotations based on evolutionary models"/>
</dbReference>
<dbReference type="PhylomeDB" id="Q9H7T3"/>
<dbReference type="TreeFam" id="TF336382"/>
<dbReference type="PathwayCommons" id="Q9H7T3"/>
<dbReference type="SignaLink" id="Q9H7T3"/>
<dbReference type="BioGRID-ORCS" id="79946">
    <property type="hits" value="17 hits in 1122 CRISPR screens"/>
</dbReference>
<dbReference type="GenomeRNAi" id="79946"/>
<dbReference type="Pharos" id="Q9H7T3">
    <property type="development level" value="Tdark"/>
</dbReference>
<dbReference type="PRO" id="PR:Q9H7T3"/>
<dbReference type="Proteomes" id="UP000005640">
    <property type="component" value="Unplaced"/>
</dbReference>
<dbReference type="RNAct" id="Q9H7T3">
    <property type="molecule type" value="protein"/>
</dbReference>
<keyword id="KW-1185">Reference proteome</keyword>
<feature type="chain" id="PRO_0000089814" description="Uncharacterized protein C10orf95">
    <location>
        <begin position="1"/>
        <end position="257"/>
    </location>
</feature>
<feature type="region of interest" description="Disordered" evidence="1">
    <location>
        <begin position="1"/>
        <end position="164"/>
    </location>
</feature>
<feature type="region of interest" description="Disordered" evidence="1">
    <location>
        <begin position="225"/>
        <end position="257"/>
    </location>
</feature>
<feature type="compositionally biased region" description="Basic and acidic residues" evidence="1">
    <location>
        <begin position="10"/>
        <end position="28"/>
    </location>
</feature>
<feature type="compositionally biased region" description="Basic residues" evidence="1">
    <location>
        <begin position="54"/>
        <end position="65"/>
    </location>
</feature>
<feature type="compositionally biased region" description="Pro residues" evidence="1">
    <location>
        <begin position="125"/>
        <end position="139"/>
    </location>
</feature>
<feature type="compositionally biased region" description="Basic residues" evidence="1">
    <location>
        <begin position="144"/>
        <end position="162"/>
    </location>
</feature>
<protein>
    <recommendedName>
        <fullName>Uncharacterized protein C10orf95</fullName>
    </recommendedName>
</protein>
<gene>
    <name type="primary">C10orf95</name>
</gene>
<comment type="interaction">
    <interactant intactId="EBI-6949335">
        <id>Q9H7T3</id>
    </interactant>
    <interactant intactId="EBI-6949352">
        <id>Q96E22</id>
        <label>NUS1</label>
    </interactant>
    <organismsDiffer>false</organismsDiffer>
    <experiments>3</experiments>
</comment>
<name>CJ095_HUMAN</name>
<organism>
    <name type="scientific">Homo sapiens</name>
    <name type="common">Human</name>
    <dbReference type="NCBI Taxonomy" id="9606"/>
    <lineage>
        <taxon>Eukaryota</taxon>
        <taxon>Metazoa</taxon>
        <taxon>Chordata</taxon>
        <taxon>Craniata</taxon>
        <taxon>Vertebrata</taxon>
        <taxon>Euteleostomi</taxon>
        <taxon>Mammalia</taxon>
        <taxon>Eutheria</taxon>
        <taxon>Euarchontoglires</taxon>
        <taxon>Primates</taxon>
        <taxon>Haplorrhini</taxon>
        <taxon>Catarrhini</taxon>
        <taxon>Hominidae</taxon>
        <taxon>Homo</taxon>
    </lineage>
</organism>
<proteinExistence type="evidence at protein level"/>
<reference key="1">
    <citation type="journal article" date="2004" name="Nat. Genet.">
        <title>Complete sequencing and characterization of 21,243 full-length human cDNAs.</title>
        <authorList>
            <person name="Ota T."/>
            <person name="Suzuki Y."/>
            <person name="Nishikawa T."/>
            <person name="Otsuki T."/>
            <person name="Sugiyama T."/>
            <person name="Irie R."/>
            <person name="Wakamatsu A."/>
            <person name="Hayashi K."/>
            <person name="Sato H."/>
            <person name="Nagai K."/>
            <person name="Kimura K."/>
            <person name="Makita H."/>
            <person name="Sekine M."/>
            <person name="Obayashi M."/>
            <person name="Nishi T."/>
            <person name="Shibahara T."/>
            <person name="Tanaka T."/>
            <person name="Ishii S."/>
            <person name="Yamamoto J."/>
            <person name="Saito K."/>
            <person name="Kawai Y."/>
            <person name="Isono Y."/>
            <person name="Nakamura Y."/>
            <person name="Nagahari K."/>
            <person name="Murakami K."/>
            <person name="Yasuda T."/>
            <person name="Iwayanagi T."/>
            <person name="Wagatsuma M."/>
            <person name="Shiratori A."/>
            <person name="Sudo H."/>
            <person name="Hosoiri T."/>
            <person name="Kaku Y."/>
            <person name="Kodaira H."/>
            <person name="Kondo H."/>
            <person name="Sugawara M."/>
            <person name="Takahashi M."/>
            <person name="Kanda K."/>
            <person name="Yokoi T."/>
            <person name="Furuya T."/>
            <person name="Kikkawa E."/>
            <person name="Omura Y."/>
            <person name="Abe K."/>
            <person name="Kamihara K."/>
            <person name="Katsuta N."/>
            <person name="Sato K."/>
            <person name="Tanikawa M."/>
            <person name="Yamazaki M."/>
            <person name="Ninomiya K."/>
            <person name="Ishibashi T."/>
            <person name="Yamashita H."/>
            <person name="Murakawa K."/>
            <person name="Fujimori K."/>
            <person name="Tanai H."/>
            <person name="Kimata M."/>
            <person name="Watanabe M."/>
            <person name="Hiraoka S."/>
            <person name="Chiba Y."/>
            <person name="Ishida S."/>
            <person name="Ono Y."/>
            <person name="Takiguchi S."/>
            <person name="Watanabe S."/>
            <person name="Yosida M."/>
            <person name="Hotuta T."/>
            <person name="Kusano J."/>
            <person name="Kanehori K."/>
            <person name="Takahashi-Fujii A."/>
            <person name="Hara H."/>
            <person name="Tanase T.-O."/>
            <person name="Nomura Y."/>
            <person name="Togiya S."/>
            <person name="Komai F."/>
            <person name="Hara R."/>
            <person name="Takeuchi K."/>
            <person name="Arita M."/>
            <person name="Imose N."/>
            <person name="Musashino K."/>
            <person name="Yuuki H."/>
            <person name="Oshima A."/>
            <person name="Sasaki N."/>
            <person name="Aotsuka S."/>
            <person name="Yoshikawa Y."/>
            <person name="Matsunawa H."/>
            <person name="Ichihara T."/>
            <person name="Shiohata N."/>
            <person name="Sano S."/>
            <person name="Moriya S."/>
            <person name="Momiyama H."/>
            <person name="Satoh N."/>
            <person name="Takami S."/>
            <person name="Terashima Y."/>
            <person name="Suzuki O."/>
            <person name="Nakagawa S."/>
            <person name="Senoh A."/>
            <person name="Mizoguchi H."/>
            <person name="Goto Y."/>
            <person name="Shimizu F."/>
            <person name="Wakebe H."/>
            <person name="Hishigaki H."/>
            <person name="Watanabe T."/>
            <person name="Sugiyama A."/>
            <person name="Takemoto M."/>
            <person name="Kawakami B."/>
            <person name="Yamazaki M."/>
            <person name="Watanabe K."/>
            <person name="Kumagai A."/>
            <person name="Itakura S."/>
            <person name="Fukuzumi Y."/>
            <person name="Fujimori Y."/>
            <person name="Komiyama M."/>
            <person name="Tashiro H."/>
            <person name="Tanigami A."/>
            <person name="Fujiwara T."/>
            <person name="Ono T."/>
            <person name="Yamada K."/>
            <person name="Fujii Y."/>
            <person name="Ozaki K."/>
            <person name="Hirao M."/>
            <person name="Ohmori Y."/>
            <person name="Kawabata A."/>
            <person name="Hikiji T."/>
            <person name="Kobatake N."/>
            <person name="Inagaki H."/>
            <person name="Ikema Y."/>
            <person name="Okamoto S."/>
            <person name="Okitani R."/>
            <person name="Kawakami T."/>
            <person name="Noguchi S."/>
            <person name="Itoh T."/>
            <person name="Shigeta K."/>
            <person name="Senba T."/>
            <person name="Matsumura K."/>
            <person name="Nakajima Y."/>
            <person name="Mizuno T."/>
            <person name="Morinaga M."/>
            <person name="Sasaki M."/>
            <person name="Togashi T."/>
            <person name="Oyama M."/>
            <person name="Hata H."/>
            <person name="Watanabe M."/>
            <person name="Komatsu T."/>
            <person name="Mizushima-Sugano J."/>
            <person name="Satoh T."/>
            <person name="Shirai Y."/>
            <person name="Takahashi Y."/>
            <person name="Nakagawa K."/>
            <person name="Okumura K."/>
            <person name="Nagase T."/>
            <person name="Nomura N."/>
            <person name="Kikuchi H."/>
            <person name="Masuho Y."/>
            <person name="Yamashita R."/>
            <person name="Nakai K."/>
            <person name="Yada T."/>
            <person name="Nakamura Y."/>
            <person name="Ohara O."/>
            <person name="Isogai T."/>
            <person name="Sugano S."/>
        </authorList>
    </citation>
    <scope>NUCLEOTIDE SEQUENCE [LARGE SCALE MRNA]</scope>
    <source>
        <tissue>Placenta</tissue>
    </source>
</reference>
<reference key="2">
    <citation type="journal article" date="2004" name="Nature">
        <title>The DNA sequence and comparative analysis of human chromosome 10.</title>
        <authorList>
            <person name="Deloukas P."/>
            <person name="Earthrowl M.E."/>
            <person name="Grafham D.V."/>
            <person name="Rubenfield M."/>
            <person name="French L."/>
            <person name="Steward C.A."/>
            <person name="Sims S.K."/>
            <person name="Jones M.C."/>
            <person name="Searle S."/>
            <person name="Scott C."/>
            <person name="Howe K."/>
            <person name="Hunt S.E."/>
            <person name="Andrews T.D."/>
            <person name="Gilbert J.G.R."/>
            <person name="Swarbreck D."/>
            <person name="Ashurst J.L."/>
            <person name="Taylor A."/>
            <person name="Battles J."/>
            <person name="Bird C.P."/>
            <person name="Ainscough R."/>
            <person name="Almeida J.P."/>
            <person name="Ashwell R.I.S."/>
            <person name="Ambrose K.D."/>
            <person name="Babbage A.K."/>
            <person name="Bagguley C.L."/>
            <person name="Bailey J."/>
            <person name="Banerjee R."/>
            <person name="Bates K."/>
            <person name="Beasley H."/>
            <person name="Bray-Allen S."/>
            <person name="Brown A.J."/>
            <person name="Brown J.Y."/>
            <person name="Burford D.C."/>
            <person name="Burrill W."/>
            <person name="Burton J."/>
            <person name="Cahill P."/>
            <person name="Camire D."/>
            <person name="Carter N.P."/>
            <person name="Chapman J.C."/>
            <person name="Clark S.Y."/>
            <person name="Clarke G."/>
            <person name="Clee C.M."/>
            <person name="Clegg S."/>
            <person name="Corby N."/>
            <person name="Coulson A."/>
            <person name="Dhami P."/>
            <person name="Dutta I."/>
            <person name="Dunn M."/>
            <person name="Faulkner L."/>
            <person name="Frankish A."/>
            <person name="Frankland J.A."/>
            <person name="Garner P."/>
            <person name="Garnett J."/>
            <person name="Gribble S."/>
            <person name="Griffiths C."/>
            <person name="Grocock R."/>
            <person name="Gustafson E."/>
            <person name="Hammond S."/>
            <person name="Harley J.L."/>
            <person name="Hart E."/>
            <person name="Heath P.D."/>
            <person name="Ho T.P."/>
            <person name="Hopkins B."/>
            <person name="Horne J."/>
            <person name="Howden P.J."/>
            <person name="Huckle E."/>
            <person name="Hynds C."/>
            <person name="Johnson C."/>
            <person name="Johnson D."/>
            <person name="Kana A."/>
            <person name="Kay M."/>
            <person name="Kimberley A.M."/>
            <person name="Kershaw J.K."/>
            <person name="Kokkinaki M."/>
            <person name="Laird G.K."/>
            <person name="Lawlor S."/>
            <person name="Lee H.M."/>
            <person name="Leongamornlert D.A."/>
            <person name="Laird G."/>
            <person name="Lloyd C."/>
            <person name="Lloyd D.M."/>
            <person name="Loveland J."/>
            <person name="Lovell J."/>
            <person name="McLaren S."/>
            <person name="McLay K.E."/>
            <person name="McMurray A."/>
            <person name="Mashreghi-Mohammadi M."/>
            <person name="Matthews L."/>
            <person name="Milne S."/>
            <person name="Nickerson T."/>
            <person name="Nguyen M."/>
            <person name="Overton-Larty E."/>
            <person name="Palmer S.A."/>
            <person name="Pearce A.V."/>
            <person name="Peck A.I."/>
            <person name="Pelan S."/>
            <person name="Phillimore B."/>
            <person name="Porter K."/>
            <person name="Rice C.M."/>
            <person name="Rogosin A."/>
            <person name="Ross M.T."/>
            <person name="Sarafidou T."/>
            <person name="Sehra H.K."/>
            <person name="Shownkeen R."/>
            <person name="Skuce C.D."/>
            <person name="Smith M."/>
            <person name="Standring L."/>
            <person name="Sycamore N."/>
            <person name="Tester J."/>
            <person name="Thorpe A."/>
            <person name="Torcasso W."/>
            <person name="Tracey A."/>
            <person name="Tromans A."/>
            <person name="Tsolas J."/>
            <person name="Wall M."/>
            <person name="Walsh J."/>
            <person name="Wang H."/>
            <person name="Weinstock K."/>
            <person name="West A.P."/>
            <person name="Willey D.L."/>
            <person name="Whitehead S.L."/>
            <person name="Wilming L."/>
            <person name="Wray P.W."/>
            <person name="Young L."/>
            <person name="Chen Y."/>
            <person name="Lovering R.C."/>
            <person name="Moschonas N.K."/>
            <person name="Siebert R."/>
            <person name="Fechtel K."/>
            <person name="Bentley D."/>
            <person name="Durbin R.M."/>
            <person name="Hubbard T."/>
            <person name="Doucette-Stamm L."/>
            <person name="Beck S."/>
            <person name="Smith D.R."/>
            <person name="Rogers J."/>
        </authorList>
    </citation>
    <scope>NUCLEOTIDE SEQUENCE [LARGE SCALE GENOMIC DNA]</scope>
</reference>
<reference key="3">
    <citation type="journal article" date="2004" name="Genome Res.">
        <title>The status, quality, and expansion of the NIH full-length cDNA project: the Mammalian Gene Collection (MGC).</title>
        <authorList>
            <consortium name="The MGC Project Team"/>
        </authorList>
    </citation>
    <scope>NUCLEOTIDE SEQUENCE [LARGE SCALE MRNA]</scope>
</reference>
<accession>Q9H7T3</accession>
<accession>A0AVQ7</accession>